<reference key="1">
    <citation type="journal article" date="1997" name="Nature">
        <title>The nucleotide sequence of Saccharomyces cerevisiae chromosome XV.</title>
        <authorList>
            <person name="Dujon B."/>
            <person name="Albermann K."/>
            <person name="Aldea M."/>
            <person name="Alexandraki D."/>
            <person name="Ansorge W."/>
            <person name="Arino J."/>
            <person name="Benes V."/>
            <person name="Bohn C."/>
            <person name="Bolotin-Fukuhara M."/>
            <person name="Bordonne R."/>
            <person name="Boyer J."/>
            <person name="Camasses A."/>
            <person name="Casamayor A."/>
            <person name="Casas C."/>
            <person name="Cheret G."/>
            <person name="Cziepluch C."/>
            <person name="Daignan-Fornier B."/>
            <person name="Dang V.-D."/>
            <person name="de Haan M."/>
            <person name="Delius H."/>
            <person name="Durand P."/>
            <person name="Fairhead C."/>
            <person name="Feldmann H."/>
            <person name="Gaillon L."/>
            <person name="Galisson F."/>
            <person name="Gamo F.-J."/>
            <person name="Gancedo C."/>
            <person name="Goffeau A."/>
            <person name="Goulding S.E."/>
            <person name="Grivell L.A."/>
            <person name="Habbig B."/>
            <person name="Hand N.J."/>
            <person name="Hani J."/>
            <person name="Hattenhorst U."/>
            <person name="Hebling U."/>
            <person name="Hernando Y."/>
            <person name="Herrero E."/>
            <person name="Heumann K."/>
            <person name="Hiesel R."/>
            <person name="Hilger F."/>
            <person name="Hofmann B."/>
            <person name="Hollenberg C.P."/>
            <person name="Hughes B."/>
            <person name="Jauniaux J.-C."/>
            <person name="Kalogeropoulos A."/>
            <person name="Katsoulou C."/>
            <person name="Kordes E."/>
            <person name="Lafuente M.J."/>
            <person name="Landt O."/>
            <person name="Louis E.J."/>
            <person name="Maarse A.C."/>
            <person name="Madania A."/>
            <person name="Mannhaupt G."/>
            <person name="Marck C."/>
            <person name="Martin R.P."/>
            <person name="Mewes H.-W."/>
            <person name="Michaux G."/>
            <person name="Paces V."/>
            <person name="Parle-McDermott A.G."/>
            <person name="Pearson B.M."/>
            <person name="Perrin A."/>
            <person name="Pettersson B."/>
            <person name="Poch O."/>
            <person name="Pohl T.M."/>
            <person name="Poirey R."/>
            <person name="Portetelle D."/>
            <person name="Pujol A."/>
            <person name="Purnelle B."/>
            <person name="Ramezani Rad M."/>
            <person name="Rechmann S."/>
            <person name="Schwager C."/>
            <person name="Schweizer M."/>
            <person name="Sor F."/>
            <person name="Sterky F."/>
            <person name="Tarassov I.A."/>
            <person name="Teodoru C."/>
            <person name="Tettelin H."/>
            <person name="Thierry A."/>
            <person name="Tobiasch E."/>
            <person name="Tzermia M."/>
            <person name="Uhlen M."/>
            <person name="Unseld M."/>
            <person name="Valens M."/>
            <person name="Vandenbol M."/>
            <person name="Vetter I."/>
            <person name="Vlcek C."/>
            <person name="Voet M."/>
            <person name="Volckaert G."/>
            <person name="Voss H."/>
            <person name="Wambutt R."/>
            <person name="Wedler H."/>
            <person name="Wiemann S."/>
            <person name="Winsor B."/>
            <person name="Wolfe K.H."/>
            <person name="Zollner A."/>
            <person name="Zumstein E."/>
            <person name="Kleine K."/>
        </authorList>
    </citation>
    <scope>NUCLEOTIDE SEQUENCE [LARGE SCALE GENOMIC DNA]</scope>
    <source>
        <strain>ATCC 204508 / S288c</strain>
    </source>
</reference>
<reference key="2">
    <citation type="journal article" date="2014" name="G3 (Bethesda)">
        <title>The reference genome sequence of Saccharomyces cerevisiae: Then and now.</title>
        <authorList>
            <person name="Engel S.R."/>
            <person name="Dietrich F.S."/>
            <person name="Fisk D.G."/>
            <person name="Binkley G."/>
            <person name="Balakrishnan R."/>
            <person name="Costanzo M.C."/>
            <person name="Dwight S.S."/>
            <person name="Hitz B.C."/>
            <person name="Karra K."/>
            <person name="Nash R.S."/>
            <person name="Weng S."/>
            <person name="Wong E.D."/>
            <person name="Lloyd P."/>
            <person name="Skrzypek M.S."/>
            <person name="Miyasato S.R."/>
            <person name="Simison M."/>
            <person name="Cherry J.M."/>
        </authorList>
    </citation>
    <scope>GENOME REANNOTATION</scope>
    <source>
        <strain>ATCC 204508 / S288c</strain>
    </source>
</reference>
<reference key="3">
    <citation type="journal article" date="2007" name="Genome Res.">
        <title>Approaching a complete repository of sequence-verified protein-encoding clones for Saccharomyces cerevisiae.</title>
        <authorList>
            <person name="Hu Y."/>
            <person name="Rolfs A."/>
            <person name="Bhullar B."/>
            <person name="Murthy T.V.S."/>
            <person name="Zhu C."/>
            <person name="Berger M.F."/>
            <person name="Camargo A.A."/>
            <person name="Kelley F."/>
            <person name="McCarron S."/>
            <person name="Jepson D."/>
            <person name="Richardson A."/>
            <person name="Raphael J."/>
            <person name="Moreira D."/>
            <person name="Taycher E."/>
            <person name="Zuo D."/>
            <person name="Mohr S."/>
            <person name="Kane M.F."/>
            <person name="Williamson J."/>
            <person name="Simpson A.J.G."/>
            <person name="Bulyk M.L."/>
            <person name="Harlow E."/>
            <person name="Marsischky G."/>
            <person name="Kolodner R.D."/>
            <person name="LaBaer J."/>
        </authorList>
    </citation>
    <scope>NUCLEOTIDE SEQUENCE [GENOMIC DNA]</scope>
    <source>
        <strain>ATCC 204508 / S288c</strain>
    </source>
</reference>
<reference key="4">
    <citation type="journal article" date="1997" name="Mol. Cell. Biol.">
        <title>Yap, a novel family of eight bZIP proteins in Saccharomyces cerevisiae with distinct biological functions.</title>
        <authorList>
            <person name="Fernandes L."/>
            <person name="Rodrigues-Pousada C."/>
            <person name="Struhl K."/>
        </authorList>
    </citation>
    <scope>FUNCTION</scope>
    <scope>ISOLATION OF YAP FAMILY PROTEINS</scope>
</reference>
<reference key="5">
    <citation type="journal article" date="2003" name="Yeast">
        <title>Identification of multicopy suppressors of cell cycle arrest at the G1-S transition in Saccharomyces cerevisiae.</title>
        <authorList>
            <person name="Munoz I."/>
            <person name="Simon E."/>
            <person name="Casals N."/>
            <person name="Clotet J."/>
            <person name="Arino J."/>
        </authorList>
    </citation>
    <scope>FUNCTION</scope>
    <scope>CELL CYCLE ACTIVATION</scope>
</reference>
<reference key="6">
    <citation type="journal article" date="2003" name="Nature">
        <title>Global analysis of protein localization in budding yeast.</title>
        <authorList>
            <person name="Huh W.-K."/>
            <person name="Falvo J.V."/>
            <person name="Gerke L.C."/>
            <person name="Carroll A.S."/>
            <person name="Howson R.W."/>
            <person name="Weissman J.S."/>
            <person name="O'Shea E.K."/>
        </authorList>
    </citation>
    <scope>SUBCELLULAR LOCATION [LARGE SCALE ANALYSIS]</scope>
</reference>
<reference key="7">
    <citation type="journal article" date="2003" name="Nature">
        <title>Global analysis of protein expression in yeast.</title>
        <authorList>
            <person name="Ghaemmaghami S."/>
            <person name="Huh W.-K."/>
            <person name="Bower K."/>
            <person name="Howson R.W."/>
            <person name="Belle A."/>
            <person name="Dephoure N."/>
            <person name="O'Shea E.K."/>
            <person name="Weissman J.S."/>
        </authorList>
    </citation>
    <scope>LEVEL OF PROTEIN EXPRESSION [LARGE SCALE ANALYSIS]</scope>
</reference>
<sequence>MRQRRSVVAVSVKPKGFKLGHKQGSMSTTSPPPSSPDGNVSTSGPSAIKLSKNWELPQRLKPGRKPKSKRGDASANNDGSSKIKKVQTSNQKDQMTTKDHENEGAKGHEGKSDDEGNGSGDENGVDSVEKRRRQNRDAQRAYRERRTTRIQVLEEKVEMLHNLVDDWQRKYKLLESEFSDTKENLQKSIALNNELQKALPLIVNTPFQQQPENPPDNPISILEMVENFKPIGAVSLKKGKLKAHC</sequence>
<keyword id="KW-0010">Activator</keyword>
<keyword id="KW-0238">DNA-binding</keyword>
<keyword id="KW-0539">Nucleus</keyword>
<keyword id="KW-1185">Reference proteome</keyword>
<keyword id="KW-0804">Transcription</keyword>
<keyword id="KW-0805">Transcription regulation</keyword>
<proteinExistence type="evidence at protein level"/>
<comment type="function">
    <text evidence="3 6">Probable transcription activator linked to cell cycle that induces transcription activation of genes in the environmental stress response and metabolism control pathways, like the closely related YAP5.</text>
</comment>
<comment type="subunit">
    <text evidence="1">Homodimer.</text>
</comment>
<comment type="subcellular location">
    <subcellularLocation>
        <location evidence="4">Nucleus</location>
    </subcellularLocation>
</comment>
<comment type="miscellaneous">
    <text>One of 8 closely related fungi-specific YAP proteins (YAP1 to YAP8), which all seem to be transcription activators of the environmental stress response and metabolism control pathways and to have similar but not identical DNA binding specificities.</text>
</comment>
<comment type="miscellaneous">
    <text evidence="5">Present with 1700 molecules/cell in log phase SD medium.</text>
</comment>
<comment type="similarity">
    <text evidence="7">Belongs to the bZIP family. YAP subfamily.</text>
</comment>
<gene>
    <name type="primary">YAP7</name>
    <name type="ordered locus">YOL028C</name>
</gene>
<feature type="chain" id="PRO_0000076527" description="AP-1-like transcription factor YAP7">
    <location>
        <begin position="1"/>
        <end position="245"/>
    </location>
</feature>
<feature type="domain" description="bZIP">
    <location>
        <begin position="125"/>
        <end position="188"/>
    </location>
</feature>
<feature type="region of interest" description="Disordered" evidence="2">
    <location>
        <begin position="1"/>
        <end position="144"/>
    </location>
</feature>
<feature type="region of interest" description="Basic motif" evidence="1">
    <location>
        <begin position="130"/>
        <end position="149"/>
    </location>
</feature>
<feature type="region of interest" description="Leucine-zipper" evidence="1">
    <location>
        <begin position="153"/>
        <end position="181"/>
    </location>
</feature>
<feature type="compositionally biased region" description="Polar residues" evidence="2">
    <location>
        <begin position="74"/>
        <end position="94"/>
    </location>
</feature>
<feature type="compositionally biased region" description="Basic and acidic residues" evidence="2">
    <location>
        <begin position="95"/>
        <end position="114"/>
    </location>
</feature>
<feature type="compositionally biased region" description="Basic and acidic residues" evidence="2">
    <location>
        <begin position="135"/>
        <end position="144"/>
    </location>
</feature>
<organism>
    <name type="scientific">Saccharomyces cerevisiae (strain ATCC 204508 / S288c)</name>
    <name type="common">Baker's yeast</name>
    <dbReference type="NCBI Taxonomy" id="559292"/>
    <lineage>
        <taxon>Eukaryota</taxon>
        <taxon>Fungi</taxon>
        <taxon>Dikarya</taxon>
        <taxon>Ascomycota</taxon>
        <taxon>Saccharomycotina</taxon>
        <taxon>Saccharomycetes</taxon>
        <taxon>Saccharomycetales</taxon>
        <taxon>Saccharomycetaceae</taxon>
        <taxon>Saccharomyces</taxon>
    </lineage>
</organism>
<dbReference type="EMBL" id="Z74770">
    <property type="protein sequence ID" value="CAA99028.1"/>
    <property type="molecule type" value="Genomic_DNA"/>
</dbReference>
<dbReference type="EMBL" id="AY558012">
    <property type="protein sequence ID" value="AAS56338.1"/>
    <property type="molecule type" value="Genomic_DNA"/>
</dbReference>
<dbReference type="EMBL" id="BK006948">
    <property type="protein sequence ID" value="DAA10753.1"/>
    <property type="molecule type" value="Genomic_DNA"/>
</dbReference>
<dbReference type="PIR" id="S66711">
    <property type="entry name" value="S66711"/>
</dbReference>
<dbReference type="RefSeq" id="NP_014614.1">
    <property type="nucleotide sequence ID" value="NM_001183282.1"/>
</dbReference>
<dbReference type="SMR" id="Q08182"/>
<dbReference type="BioGRID" id="34372">
    <property type="interactions" value="71"/>
</dbReference>
<dbReference type="DIP" id="DIP-4935N"/>
<dbReference type="FunCoup" id="Q08182">
    <property type="interactions" value="753"/>
</dbReference>
<dbReference type="IntAct" id="Q08182">
    <property type="interactions" value="8"/>
</dbReference>
<dbReference type="MINT" id="Q08182"/>
<dbReference type="STRING" id="4932.YOL028C"/>
<dbReference type="iPTMnet" id="Q08182"/>
<dbReference type="PaxDb" id="4932-YOL028C"/>
<dbReference type="PeptideAtlas" id="Q08182"/>
<dbReference type="EnsemblFungi" id="YOL028C_mRNA">
    <property type="protein sequence ID" value="YOL028C"/>
    <property type="gene ID" value="YOL028C"/>
</dbReference>
<dbReference type="GeneID" id="854129"/>
<dbReference type="KEGG" id="sce:YOL028C"/>
<dbReference type="AGR" id="SGD:S000005388"/>
<dbReference type="SGD" id="S000005388">
    <property type="gene designation" value="YAP7"/>
</dbReference>
<dbReference type="VEuPathDB" id="FungiDB:YOL028C"/>
<dbReference type="eggNOG" id="ENOG502SAAA">
    <property type="taxonomic scope" value="Eukaryota"/>
</dbReference>
<dbReference type="HOGENOM" id="CLU_077482_0_0_1"/>
<dbReference type="InParanoid" id="Q08182"/>
<dbReference type="OMA" id="FKPIGAV"/>
<dbReference type="OrthoDB" id="4070712at2759"/>
<dbReference type="BioCyc" id="YEAST:G3O-33444-MONOMER"/>
<dbReference type="BioGRID-ORCS" id="854129">
    <property type="hits" value="4 hits in 13 CRISPR screens"/>
</dbReference>
<dbReference type="PRO" id="PR:Q08182"/>
<dbReference type="Proteomes" id="UP000002311">
    <property type="component" value="Chromosome XV"/>
</dbReference>
<dbReference type="RNAct" id="Q08182">
    <property type="molecule type" value="protein"/>
</dbReference>
<dbReference type="GO" id="GO:0005634">
    <property type="term" value="C:nucleus"/>
    <property type="evidence" value="ECO:0000250"/>
    <property type="project" value="SGD"/>
</dbReference>
<dbReference type="GO" id="GO:0003700">
    <property type="term" value="F:DNA-binding transcription factor activity"/>
    <property type="evidence" value="ECO:0007669"/>
    <property type="project" value="InterPro"/>
</dbReference>
<dbReference type="GO" id="GO:0043565">
    <property type="term" value="F:sequence-specific DNA binding"/>
    <property type="evidence" value="ECO:0000314"/>
    <property type="project" value="SGD"/>
</dbReference>
<dbReference type="GO" id="GO:0000976">
    <property type="term" value="F:transcription cis-regulatory region binding"/>
    <property type="evidence" value="ECO:0007669"/>
    <property type="project" value="InterPro"/>
</dbReference>
<dbReference type="GO" id="GO:0045944">
    <property type="term" value="P:positive regulation of transcription by RNA polymerase II"/>
    <property type="evidence" value="ECO:0000250"/>
    <property type="project" value="SGD"/>
</dbReference>
<dbReference type="CDD" id="cd14688">
    <property type="entry name" value="bZIP_YAP"/>
    <property type="match status" value="1"/>
</dbReference>
<dbReference type="FunFam" id="1.20.5.170:FF:000150">
    <property type="entry name" value="AP-1-like transcription factor YAP7"/>
    <property type="match status" value="1"/>
</dbReference>
<dbReference type="Gene3D" id="1.20.5.170">
    <property type="match status" value="1"/>
</dbReference>
<dbReference type="InterPro" id="IPR050936">
    <property type="entry name" value="AP-1-like"/>
</dbReference>
<dbReference type="InterPro" id="IPR004827">
    <property type="entry name" value="bZIP"/>
</dbReference>
<dbReference type="InterPro" id="IPR046347">
    <property type="entry name" value="bZIP_sf"/>
</dbReference>
<dbReference type="InterPro" id="IPR018287">
    <property type="entry name" value="Hap4_TF_heteromerisation"/>
</dbReference>
<dbReference type="PANTHER" id="PTHR40621:SF6">
    <property type="entry name" value="AP-1-LIKE TRANSCRIPTION FACTOR YAP1-RELATED"/>
    <property type="match status" value="1"/>
</dbReference>
<dbReference type="PANTHER" id="PTHR40621">
    <property type="entry name" value="TRANSCRIPTION FACTOR KAPC-RELATED"/>
    <property type="match status" value="1"/>
</dbReference>
<dbReference type="Pfam" id="PF00170">
    <property type="entry name" value="bZIP_1"/>
    <property type="match status" value="1"/>
</dbReference>
<dbReference type="Pfam" id="PF10297">
    <property type="entry name" value="Hap4_Hap_bind"/>
    <property type="match status" value="1"/>
</dbReference>
<dbReference type="SMART" id="SM00338">
    <property type="entry name" value="BRLZ"/>
    <property type="match status" value="1"/>
</dbReference>
<dbReference type="SUPFAM" id="SSF57959">
    <property type="entry name" value="Leucine zipper domain"/>
    <property type="match status" value="1"/>
</dbReference>
<dbReference type="PROSITE" id="PS00036">
    <property type="entry name" value="BZIP_BASIC"/>
    <property type="match status" value="1"/>
</dbReference>
<evidence type="ECO:0000250" key="1"/>
<evidence type="ECO:0000256" key="2">
    <source>
        <dbReference type="SAM" id="MobiDB-lite"/>
    </source>
</evidence>
<evidence type="ECO:0000269" key="3">
    <source>
    </source>
</evidence>
<evidence type="ECO:0000269" key="4">
    <source>
    </source>
</evidence>
<evidence type="ECO:0000269" key="5">
    <source>
    </source>
</evidence>
<evidence type="ECO:0000269" key="6">
    <source>
    </source>
</evidence>
<evidence type="ECO:0000305" key="7"/>
<accession>Q08182</accession>
<accession>D6W237</accession>
<name>YAP7_YEAST</name>
<protein>
    <recommendedName>
        <fullName>AP-1-like transcription factor YAP7</fullName>
    </recommendedName>
</protein>